<dbReference type="EC" id="3.5.4.25" evidence="1"/>
<dbReference type="EMBL" id="BX950851">
    <property type="protein sequence ID" value="CAG74846.1"/>
    <property type="molecule type" value="Genomic_DNA"/>
</dbReference>
<dbReference type="RefSeq" id="WP_011093509.1">
    <property type="nucleotide sequence ID" value="NC_004547.2"/>
</dbReference>
<dbReference type="SMR" id="Q6D5U5"/>
<dbReference type="STRING" id="218491.ECA1943"/>
<dbReference type="GeneID" id="57209353"/>
<dbReference type="KEGG" id="eca:ECA1943"/>
<dbReference type="PATRIC" id="fig|218491.5.peg.1976"/>
<dbReference type="eggNOG" id="COG0807">
    <property type="taxonomic scope" value="Bacteria"/>
</dbReference>
<dbReference type="HOGENOM" id="CLU_020273_2_1_6"/>
<dbReference type="OrthoDB" id="9793111at2"/>
<dbReference type="UniPathway" id="UPA00275">
    <property type="reaction ID" value="UER00400"/>
</dbReference>
<dbReference type="Proteomes" id="UP000007966">
    <property type="component" value="Chromosome"/>
</dbReference>
<dbReference type="GO" id="GO:0005829">
    <property type="term" value="C:cytosol"/>
    <property type="evidence" value="ECO:0007669"/>
    <property type="project" value="TreeGrafter"/>
</dbReference>
<dbReference type="GO" id="GO:0005525">
    <property type="term" value="F:GTP binding"/>
    <property type="evidence" value="ECO:0007669"/>
    <property type="project" value="UniProtKB-KW"/>
</dbReference>
<dbReference type="GO" id="GO:0003935">
    <property type="term" value="F:GTP cyclohydrolase II activity"/>
    <property type="evidence" value="ECO:0007669"/>
    <property type="project" value="UniProtKB-UniRule"/>
</dbReference>
<dbReference type="GO" id="GO:0008270">
    <property type="term" value="F:zinc ion binding"/>
    <property type="evidence" value="ECO:0007669"/>
    <property type="project" value="UniProtKB-UniRule"/>
</dbReference>
<dbReference type="GO" id="GO:0009231">
    <property type="term" value="P:riboflavin biosynthetic process"/>
    <property type="evidence" value="ECO:0007669"/>
    <property type="project" value="UniProtKB-UniRule"/>
</dbReference>
<dbReference type="CDD" id="cd00641">
    <property type="entry name" value="GTP_cyclohydro2"/>
    <property type="match status" value="1"/>
</dbReference>
<dbReference type="FunFam" id="3.40.50.10990:FF:000002">
    <property type="entry name" value="GTP cyclohydrolase-2"/>
    <property type="match status" value="1"/>
</dbReference>
<dbReference type="Gene3D" id="3.40.50.10990">
    <property type="entry name" value="GTP cyclohydrolase II"/>
    <property type="match status" value="1"/>
</dbReference>
<dbReference type="HAMAP" id="MF_00179">
    <property type="entry name" value="RibA"/>
    <property type="match status" value="1"/>
</dbReference>
<dbReference type="InterPro" id="IPR032677">
    <property type="entry name" value="GTP_cyclohydro_II"/>
</dbReference>
<dbReference type="InterPro" id="IPR000926">
    <property type="entry name" value="RibA"/>
</dbReference>
<dbReference type="InterPro" id="IPR036144">
    <property type="entry name" value="RibA-like_sf"/>
</dbReference>
<dbReference type="NCBIfam" id="NF001591">
    <property type="entry name" value="PRK00393.1"/>
    <property type="match status" value="1"/>
</dbReference>
<dbReference type="NCBIfam" id="TIGR00505">
    <property type="entry name" value="ribA"/>
    <property type="match status" value="1"/>
</dbReference>
<dbReference type="PANTHER" id="PTHR21327:SF18">
    <property type="entry name" value="3,4-DIHYDROXY-2-BUTANONE 4-PHOSPHATE SYNTHASE"/>
    <property type="match status" value="1"/>
</dbReference>
<dbReference type="PANTHER" id="PTHR21327">
    <property type="entry name" value="GTP CYCLOHYDROLASE II-RELATED"/>
    <property type="match status" value="1"/>
</dbReference>
<dbReference type="Pfam" id="PF00925">
    <property type="entry name" value="GTP_cyclohydro2"/>
    <property type="match status" value="1"/>
</dbReference>
<dbReference type="SUPFAM" id="SSF142695">
    <property type="entry name" value="RibA-like"/>
    <property type="match status" value="1"/>
</dbReference>
<organism>
    <name type="scientific">Pectobacterium atrosepticum (strain SCRI 1043 / ATCC BAA-672)</name>
    <name type="common">Erwinia carotovora subsp. atroseptica</name>
    <dbReference type="NCBI Taxonomy" id="218491"/>
    <lineage>
        <taxon>Bacteria</taxon>
        <taxon>Pseudomonadati</taxon>
        <taxon>Pseudomonadota</taxon>
        <taxon>Gammaproteobacteria</taxon>
        <taxon>Enterobacterales</taxon>
        <taxon>Pectobacteriaceae</taxon>
        <taxon>Pectobacterium</taxon>
    </lineage>
</organism>
<reference key="1">
    <citation type="journal article" date="2004" name="Proc. Natl. Acad. Sci. U.S.A.">
        <title>Genome sequence of the enterobacterial phytopathogen Erwinia carotovora subsp. atroseptica and characterization of virulence factors.</title>
        <authorList>
            <person name="Bell K.S."/>
            <person name="Sebaihia M."/>
            <person name="Pritchard L."/>
            <person name="Holden M.T.G."/>
            <person name="Hyman L.J."/>
            <person name="Holeva M.C."/>
            <person name="Thomson N.R."/>
            <person name="Bentley S.D."/>
            <person name="Churcher L.J.C."/>
            <person name="Mungall K."/>
            <person name="Atkin R."/>
            <person name="Bason N."/>
            <person name="Brooks K."/>
            <person name="Chillingworth T."/>
            <person name="Clark K."/>
            <person name="Doggett J."/>
            <person name="Fraser A."/>
            <person name="Hance Z."/>
            <person name="Hauser H."/>
            <person name="Jagels K."/>
            <person name="Moule S."/>
            <person name="Norbertczak H."/>
            <person name="Ormond D."/>
            <person name="Price C."/>
            <person name="Quail M.A."/>
            <person name="Sanders M."/>
            <person name="Walker D."/>
            <person name="Whitehead S."/>
            <person name="Salmond G.P.C."/>
            <person name="Birch P.R.J."/>
            <person name="Parkhill J."/>
            <person name="Toth I.K."/>
        </authorList>
    </citation>
    <scope>NUCLEOTIDE SEQUENCE [LARGE SCALE GENOMIC DNA]</scope>
    <source>
        <strain>SCRI 1043 / ATCC BAA-672</strain>
    </source>
</reference>
<feature type="chain" id="PRO_0000151757" description="GTP cyclohydrolase-2">
    <location>
        <begin position="1"/>
        <end position="197"/>
    </location>
</feature>
<feature type="active site" description="Proton acceptor" evidence="1">
    <location>
        <position position="126"/>
    </location>
</feature>
<feature type="active site" description="Nucleophile" evidence="1">
    <location>
        <position position="128"/>
    </location>
</feature>
<feature type="binding site" evidence="1">
    <location>
        <begin position="49"/>
        <end position="53"/>
    </location>
    <ligand>
        <name>GTP</name>
        <dbReference type="ChEBI" id="CHEBI:37565"/>
    </ligand>
</feature>
<feature type="binding site" evidence="1">
    <location>
        <position position="54"/>
    </location>
    <ligand>
        <name>Zn(2+)</name>
        <dbReference type="ChEBI" id="CHEBI:29105"/>
        <note>catalytic</note>
    </ligand>
</feature>
<feature type="binding site" evidence="1">
    <location>
        <position position="65"/>
    </location>
    <ligand>
        <name>Zn(2+)</name>
        <dbReference type="ChEBI" id="CHEBI:29105"/>
        <note>catalytic</note>
    </ligand>
</feature>
<feature type="binding site" evidence="1">
    <location>
        <position position="67"/>
    </location>
    <ligand>
        <name>Zn(2+)</name>
        <dbReference type="ChEBI" id="CHEBI:29105"/>
        <note>catalytic</note>
    </ligand>
</feature>
<feature type="binding site" evidence="1">
    <location>
        <position position="70"/>
    </location>
    <ligand>
        <name>GTP</name>
        <dbReference type="ChEBI" id="CHEBI:37565"/>
    </ligand>
</feature>
<feature type="binding site" evidence="1">
    <location>
        <begin position="92"/>
        <end position="94"/>
    </location>
    <ligand>
        <name>GTP</name>
        <dbReference type="ChEBI" id="CHEBI:37565"/>
    </ligand>
</feature>
<feature type="binding site" evidence="1">
    <location>
        <position position="114"/>
    </location>
    <ligand>
        <name>GTP</name>
        <dbReference type="ChEBI" id="CHEBI:37565"/>
    </ligand>
</feature>
<feature type="binding site" evidence="1">
    <location>
        <position position="149"/>
    </location>
    <ligand>
        <name>GTP</name>
        <dbReference type="ChEBI" id="CHEBI:37565"/>
    </ligand>
</feature>
<feature type="binding site" evidence="1">
    <location>
        <position position="154"/>
    </location>
    <ligand>
        <name>GTP</name>
        <dbReference type="ChEBI" id="CHEBI:37565"/>
    </ligand>
</feature>
<keyword id="KW-0342">GTP-binding</keyword>
<keyword id="KW-0378">Hydrolase</keyword>
<keyword id="KW-0479">Metal-binding</keyword>
<keyword id="KW-0547">Nucleotide-binding</keyword>
<keyword id="KW-1185">Reference proteome</keyword>
<keyword id="KW-0686">Riboflavin biosynthesis</keyword>
<keyword id="KW-0862">Zinc</keyword>
<gene>
    <name evidence="1" type="primary">ribA</name>
    <name type="ordered locus">ECA1943</name>
</gene>
<name>RIBA_PECAS</name>
<evidence type="ECO:0000255" key="1">
    <source>
        <dbReference type="HAMAP-Rule" id="MF_00179"/>
    </source>
</evidence>
<sequence length="197" mass="21757">MQLKRVAEAKLPTPWGDFLMVGFEEIATGHDHLALVYGDISGSVPVLARVHSECLTGDALFSLRCDCGFQLEAALGHIAEEGRGVLLYHRQEGRNIGLLNKIRAYALQDLGADTVEANHQLGFAADERDFTLCADMFKLLDVDEVRLLTNNPQKVKILNEAGINIVERVPLIVGRNPKNEHYLATKAAKMGHILDMK</sequence>
<accession>Q6D5U5</accession>
<comment type="function">
    <text evidence="1">Catalyzes the conversion of GTP to 2,5-diamino-6-ribosylamino-4(3H)-pyrimidinone 5'-phosphate (DARP), formate and pyrophosphate.</text>
</comment>
<comment type="catalytic activity">
    <reaction evidence="1">
        <text>GTP + 4 H2O = 2,5-diamino-6-hydroxy-4-(5-phosphoribosylamino)-pyrimidine + formate + 2 phosphate + 3 H(+)</text>
        <dbReference type="Rhea" id="RHEA:23704"/>
        <dbReference type="ChEBI" id="CHEBI:15377"/>
        <dbReference type="ChEBI" id="CHEBI:15378"/>
        <dbReference type="ChEBI" id="CHEBI:15740"/>
        <dbReference type="ChEBI" id="CHEBI:37565"/>
        <dbReference type="ChEBI" id="CHEBI:43474"/>
        <dbReference type="ChEBI" id="CHEBI:58614"/>
        <dbReference type="EC" id="3.5.4.25"/>
    </reaction>
</comment>
<comment type="cofactor">
    <cofactor evidence="1">
        <name>Zn(2+)</name>
        <dbReference type="ChEBI" id="CHEBI:29105"/>
    </cofactor>
    <text evidence="1">Binds 1 zinc ion per subunit.</text>
</comment>
<comment type="pathway">
    <text evidence="1">Cofactor biosynthesis; riboflavin biosynthesis; 5-amino-6-(D-ribitylamino)uracil from GTP: step 1/4.</text>
</comment>
<comment type="subunit">
    <text evidence="1">Homodimer.</text>
</comment>
<comment type="similarity">
    <text evidence="1">Belongs to the GTP cyclohydrolase II family.</text>
</comment>
<proteinExistence type="inferred from homology"/>
<protein>
    <recommendedName>
        <fullName evidence="1">GTP cyclohydrolase-2</fullName>
        <ecNumber evidence="1">3.5.4.25</ecNumber>
    </recommendedName>
    <alternativeName>
        <fullName evidence="1">GTP cyclohydrolase II</fullName>
    </alternativeName>
</protein>